<accession>P82881</accession>
<reference key="1">
    <citation type="journal article" date="2000" name="Peptides">
        <title>Purification and characterization of antimicrobial peptides from the skin of the North American green frog Rana clamitans.</title>
        <authorList>
            <person name="Halverson T."/>
            <person name="Basir Y.J."/>
            <person name="Knoop F.C."/>
            <person name="Conlon J.M."/>
        </authorList>
    </citation>
    <scope>PROTEIN SEQUENCE</scope>
    <scope>FUNCTION</scope>
    <scope>AMIDATION AT LEU-13</scope>
    <scope>MASS SPECTROMETRY</scope>
    <scope>SUBCELLULAR LOCATION</scope>
    <source>
        <tissue>Skin secretion</tissue>
    </source>
</reference>
<dbReference type="GO" id="GO:0005576">
    <property type="term" value="C:extracellular region"/>
    <property type="evidence" value="ECO:0007669"/>
    <property type="project" value="UniProtKB-SubCell"/>
</dbReference>
<dbReference type="GO" id="GO:0042742">
    <property type="term" value="P:defense response to bacterium"/>
    <property type="evidence" value="ECO:0007669"/>
    <property type="project" value="UniProtKB-KW"/>
</dbReference>
<proteinExistence type="evidence at protein level"/>
<organism>
    <name type="scientific">Lithobates clamitans</name>
    <name type="common">Green frog</name>
    <name type="synonym">Rana clamitans</name>
    <dbReference type="NCBI Taxonomy" id="145282"/>
    <lineage>
        <taxon>Eukaryota</taxon>
        <taxon>Metazoa</taxon>
        <taxon>Chordata</taxon>
        <taxon>Craniata</taxon>
        <taxon>Vertebrata</taxon>
        <taxon>Euteleostomi</taxon>
        <taxon>Amphibia</taxon>
        <taxon>Batrachia</taxon>
        <taxon>Anura</taxon>
        <taxon>Neobatrachia</taxon>
        <taxon>Ranoidea</taxon>
        <taxon>Ranidae</taxon>
        <taxon>Lithobates</taxon>
    </lineage>
</organism>
<evidence type="ECO:0000269" key="1">
    <source>
    </source>
</evidence>
<evidence type="ECO:0000303" key="2">
    <source>
    </source>
</evidence>
<evidence type="ECO:0000305" key="3"/>
<evidence type="ECO:0000305" key="4">
    <source>
    </source>
</evidence>
<feature type="peptide" id="PRO_0000043571" description="Temporin-1Cb" evidence="1">
    <location>
        <begin position="1"/>
        <end position="13"/>
    </location>
</feature>
<feature type="modified residue" description="Leucine amide" evidence="1">
    <location>
        <position position="13"/>
    </location>
</feature>
<sequence length="13" mass="1432">FLPLFASLIGKLL</sequence>
<protein>
    <recommendedName>
        <fullName evidence="2">Temporin-1Cb</fullName>
    </recommendedName>
</protein>
<name>TP1B_LITCL</name>
<comment type="function">
    <text evidence="1">Antibacterial activity against Gram-positive bacterium S.aureus (MIC=140 uM).</text>
</comment>
<comment type="subcellular location">
    <subcellularLocation>
        <location evidence="1">Secreted</location>
    </subcellularLocation>
</comment>
<comment type="tissue specificity">
    <text evidence="4">Expressed by the skin glands.</text>
</comment>
<comment type="mass spectrometry" mass="1430.0" error="0.02" method="Electrospray" evidence="1"/>
<comment type="similarity">
    <text evidence="3">Belongs to the frog skin active peptide (FSAP) family. Temporin subfamily.</text>
</comment>
<keyword id="KW-0027">Amidation</keyword>
<keyword id="KW-0878">Amphibian defense peptide</keyword>
<keyword id="KW-0044">Antibiotic</keyword>
<keyword id="KW-0929">Antimicrobial</keyword>
<keyword id="KW-0903">Direct protein sequencing</keyword>
<keyword id="KW-0964">Secreted</keyword>